<gene>
    <name evidence="2" type="primary">tuf</name>
    <name type="ordered locus">Msp_1366</name>
</gene>
<feature type="chain" id="PRO_0000337607" description="Elongation factor 1-alpha">
    <location>
        <begin position="1"/>
        <end position="413"/>
    </location>
</feature>
<feature type="domain" description="tr-type G">
    <location>
        <begin position="5"/>
        <end position="211"/>
    </location>
</feature>
<feature type="region of interest" description="G1" evidence="1">
    <location>
        <begin position="14"/>
        <end position="21"/>
    </location>
</feature>
<feature type="region of interest" description="G2" evidence="1">
    <location>
        <begin position="60"/>
        <end position="64"/>
    </location>
</feature>
<feature type="region of interest" description="G3" evidence="1">
    <location>
        <begin position="81"/>
        <end position="84"/>
    </location>
</feature>
<feature type="region of interest" description="G4" evidence="1">
    <location>
        <begin position="136"/>
        <end position="139"/>
    </location>
</feature>
<feature type="region of interest" description="G5" evidence="1">
    <location>
        <begin position="175"/>
        <end position="177"/>
    </location>
</feature>
<feature type="binding site" evidence="2">
    <location>
        <begin position="14"/>
        <end position="21"/>
    </location>
    <ligand>
        <name>GTP</name>
        <dbReference type="ChEBI" id="CHEBI:37565"/>
    </ligand>
</feature>
<feature type="binding site" evidence="2">
    <location>
        <position position="21"/>
    </location>
    <ligand>
        <name>Mg(2+)</name>
        <dbReference type="ChEBI" id="CHEBI:18420"/>
    </ligand>
</feature>
<feature type="binding site" evidence="2">
    <location>
        <begin position="81"/>
        <end position="85"/>
    </location>
    <ligand>
        <name>GTP</name>
        <dbReference type="ChEBI" id="CHEBI:37565"/>
    </ligand>
</feature>
<feature type="binding site" evidence="2">
    <location>
        <begin position="136"/>
        <end position="139"/>
    </location>
    <ligand>
        <name>GTP</name>
        <dbReference type="ChEBI" id="CHEBI:37565"/>
    </ligand>
</feature>
<reference key="1">
    <citation type="journal article" date="2006" name="J. Bacteriol.">
        <title>The genome sequence of Methanosphaera stadtmanae reveals why this human intestinal archaeon is restricted to methanol and H2 for methane formation and ATP synthesis.</title>
        <authorList>
            <person name="Fricke W.F."/>
            <person name="Seedorf H."/>
            <person name="Henne A."/>
            <person name="Kruer M."/>
            <person name="Liesegang H."/>
            <person name="Hedderich R."/>
            <person name="Gottschalk G."/>
            <person name="Thauer R.K."/>
        </authorList>
    </citation>
    <scope>NUCLEOTIDE SEQUENCE [LARGE SCALE GENOMIC DNA]</scope>
    <source>
        <strain>ATCC 43021 / DSM 3091 / JCM 11832 / MCB-3</strain>
    </source>
</reference>
<proteinExistence type="inferred from homology"/>
<protein>
    <recommendedName>
        <fullName evidence="2">Elongation factor 1-alpha</fullName>
        <shortName evidence="2">EF-1-alpha</shortName>
        <ecNumber evidence="2">3.6.5.3</ecNumber>
    </recommendedName>
    <alternativeName>
        <fullName evidence="2">Elongation factor Tu</fullName>
        <shortName evidence="2">EF-Tu</shortName>
    </alternativeName>
</protein>
<evidence type="ECO:0000250" key="1"/>
<evidence type="ECO:0000255" key="2">
    <source>
        <dbReference type="HAMAP-Rule" id="MF_00118"/>
    </source>
</evidence>
<comment type="function">
    <text evidence="2">GTP hydrolase that promotes the GTP-dependent binding of aminoacyl-tRNA to the A-site of ribosomes during protein biosynthesis.</text>
</comment>
<comment type="catalytic activity">
    <reaction evidence="2">
        <text>GTP + H2O = GDP + phosphate + H(+)</text>
        <dbReference type="Rhea" id="RHEA:19669"/>
        <dbReference type="ChEBI" id="CHEBI:15377"/>
        <dbReference type="ChEBI" id="CHEBI:15378"/>
        <dbReference type="ChEBI" id="CHEBI:37565"/>
        <dbReference type="ChEBI" id="CHEBI:43474"/>
        <dbReference type="ChEBI" id="CHEBI:58189"/>
        <dbReference type="EC" id="3.6.5.3"/>
    </reaction>
    <physiologicalReaction direction="left-to-right" evidence="2">
        <dbReference type="Rhea" id="RHEA:19670"/>
    </physiologicalReaction>
</comment>
<comment type="subcellular location">
    <subcellularLocation>
        <location evidence="2">Cytoplasm</location>
    </subcellularLocation>
</comment>
<comment type="similarity">
    <text evidence="2">Belongs to the TRAFAC class translation factor GTPase superfamily. Classic translation factor GTPase family. EF-Tu/EF-1A subfamily.</text>
</comment>
<sequence length="413" mass="44988">MAKEKTHMNLAFIGHVDHGKSTLVGHLLLLEGAIAEQQLDEGEDKFRFVMDKLGEERERGVTIDLAHAKFETQKYEYTVVDCPGHRDFVKNMITGASQADAAVLVVAANDGIMPQTKEHIFLSRTLGINQLIIAINKMDVVDYSEDKFNELKEELGALISTVGFKPSDVPFIPVSAFEGDNISEKSSNTPWYKGNTLVQELDALDEPDKPVDLPLRLPIQDVYSITGVGTVPVGRIETGILKTAENIAFEPAGVTGEVKSIEMHHEVLDKAEPGDNVGFNVRGVGKNDIKRGDVAGTTQNPPSVAKEFKAQIVVLQHPGVMTVGYTPVFHAHTAQVACTFLSLDVKLDPATGQPKEENPDFLKTGDAALVTIKPTKPMVIENIKEIPHMGRFAIRDMGQTVAAGMCIDITDAK</sequence>
<dbReference type="EC" id="3.6.5.3" evidence="2"/>
<dbReference type="EMBL" id="CP000102">
    <property type="protein sequence ID" value="ABC57742.1"/>
    <property type="molecule type" value="Genomic_DNA"/>
</dbReference>
<dbReference type="RefSeq" id="WP_011406941.1">
    <property type="nucleotide sequence ID" value="NC_007681.1"/>
</dbReference>
<dbReference type="SMR" id="Q2NEL1"/>
<dbReference type="STRING" id="339860.Msp_1366"/>
<dbReference type="GeneID" id="41325937"/>
<dbReference type="KEGG" id="mst:Msp_1366"/>
<dbReference type="eggNOG" id="arCOG01561">
    <property type="taxonomic scope" value="Archaea"/>
</dbReference>
<dbReference type="HOGENOM" id="CLU_007265_3_5_2"/>
<dbReference type="OrthoDB" id="371718at2157"/>
<dbReference type="Proteomes" id="UP000001931">
    <property type="component" value="Chromosome"/>
</dbReference>
<dbReference type="GO" id="GO:0005737">
    <property type="term" value="C:cytoplasm"/>
    <property type="evidence" value="ECO:0007669"/>
    <property type="project" value="UniProtKB-SubCell"/>
</dbReference>
<dbReference type="GO" id="GO:0005525">
    <property type="term" value="F:GTP binding"/>
    <property type="evidence" value="ECO:0007669"/>
    <property type="project" value="UniProtKB-UniRule"/>
</dbReference>
<dbReference type="GO" id="GO:0003924">
    <property type="term" value="F:GTPase activity"/>
    <property type="evidence" value="ECO:0007669"/>
    <property type="project" value="InterPro"/>
</dbReference>
<dbReference type="GO" id="GO:0003746">
    <property type="term" value="F:translation elongation factor activity"/>
    <property type="evidence" value="ECO:0007669"/>
    <property type="project" value="UniProtKB-UniRule"/>
</dbReference>
<dbReference type="CDD" id="cd03693">
    <property type="entry name" value="EF1_alpha_II"/>
    <property type="match status" value="1"/>
</dbReference>
<dbReference type="CDD" id="cd03705">
    <property type="entry name" value="EF1_alpha_III"/>
    <property type="match status" value="1"/>
</dbReference>
<dbReference type="FunFam" id="2.40.30.10:FF:000003">
    <property type="entry name" value="Elongation factor 1-alpha"/>
    <property type="match status" value="1"/>
</dbReference>
<dbReference type="FunFam" id="2.40.30.10:FF:000005">
    <property type="entry name" value="Elongation factor 1-alpha"/>
    <property type="match status" value="1"/>
</dbReference>
<dbReference type="Gene3D" id="3.40.50.300">
    <property type="entry name" value="P-loop containing nucleotide triphosphate hydrolases"/>
    <property type="match status" value="1"/>
</dbReference>
<dbReference type="Gene3D" id="2.40.30.10">
    <property type="entry name" value="Translation factors"/>
    <property type="match status" value="2"/>
</dbReference>
<dbReference type="HAMAP" id="MF_00118_A">
    <property type="entry name" value="EF_Tu_A"/>
    <property type="match status" value="1"/>
</dbReference>
<dbReference type="InterPro" id="IPR004161">
    <property type="entry name" value="EFTu-like_2"/>
</dbReference>
<dbReference type="InterPro" id="IPR031157">
    <property type="entry name" value="G_TR_CS"/>
</dbReference>
<dbReference type="InterPro" id="IPR054696">
    <property type="entry name" value="GTP-eEF1A_C"/>
</dbReference>
<dbReference type="InterPro" id="IPR027417">
    <property type="entry name" value="P-loop_NTPase"/>
</dbReference>
<dbReference type="InterPro" id="IPR005225">
    <property type="entry name" value="Small_GTP-bd"/>
</dbReference>
<dbReference type="InterPro" id="IPR000795">
    <property type="entry name" value="T_Tr_GTP-bd_dom"/>
</dbReference>
<dbReference type="InterPro" id="IPR050100">
    <property type="entry name" value="TRAFAC_GTPase_members"/>
</dbReference>
<dbReference type="InterPro" id="IPR009000">
    <property type="entry name" value="Transl_B-barrel_sf"/>
</dbReference>
<dbReference type="InterPro" id="IPR009001">
    <property type="entry name" value="Transl_elong_EF1A/Init_IF2_C"/>
</dbReference>
<dbReference type="InterPro" id="IPR004539">
    <property type="entry name" value="Transl_elong_EF1A_euk/arc"/>
</dbReference>
<dbReference type="NCBIfam" id="TIGR00483">
    <property type="entry name" value="EF-1_alpha"/>
    <property type="match status" value="1"/>
</dbReference>
<dbReference type="NCBIfam" id="NF008969">
    <property type="entry name" value="PRK12317.1"/>
    <property type="match status" value="1"/>
</dbReference>
<dbReference type="NCBIfam" id="TIGR00231">
    <property type="entry name" value="small_GTP"/>
    <property type="match status" value="1"/>
</dbReference>
<dbReference type="PANTHER" id="PTHR23115">
    <property type="entry name" value="TRANSLATION FACTOR"/>
    <property type="match status" value="1"/>
</dbReference>
<dbReference type="Pfam" id="PF22594">
    <property type="entry name" value="GTP-eEF1A_C"/>
    <property type="match status" value="1"/>
</dbReference>
<dbReference type="Pfam" id="PF00009">
    <property type="entry name" value="GTP_EFTU"/>
    <property type="match status" value="1"/>
</dbReference>
<dbReference type="Pfam" id="PF03144">
    <property type="entry name" value="GTP_EFTU_D2"/>
    <property type="match status" value="1"/>
</dbReference>
<dbReference type="PRINTS" id="PR00315">
    <property type="entry name" value="ELONGATNFCT"/>
</dbReference>
<dbReference type="SUPFAM" id="SSF50465">
    <property type="entry name" value="EF-Tu/eEF-1alpha/eIF2-gamma C-terminal domain"/>
    <property type="match status" value="1"/>
</dbReference>
<dbReference type="SUPFAM" id="SSF52540">
    <property type="entry name" value="P-loop containing nucleoside triphosphate hydrolases"/>
    <property type="match status" value="1"/>
</dbReference>
<dbReference type="SUPFAM" id="SSF50447">
    <property type="entry name" value="Translation proteins"/>
    <property type="match status" value="1"/>
</dbReference>
<dbReference type="PROSITE" id="PS00301">
    <property type="entry name" value="G_TR_1"/>
    <property type="match status" value="1"/>
</dbReference>
<dbReference type="PROSITE" id="PS51722">
    <property type="entry name" value="G_TR_2"/>
    <property type="match status" value="1"/>
</dbReference>
<name>EF1A_METST</name>
<organism>
    <name type="scientific">Methanosphaera stadtmanae (strain ATCC 43021 / DSM 3091 / JCM 11832 / MCB-3)</name>
    <dbReference type="NCBI Taxonomy" id="339860"/>
    <lineage>
        <taxon>Archaea</taxon>
        <taxon>Methanobacteriati</taxon>
        <taxon>Methanobacteriota</taxon>
        <taxon>Methanomada group</taxon>
        <taxon>Methanobacteria</taxon>
        <taxon>Methanobacteriales</taxon>
        <taxon>Methanobacteriaceae</taxon>
        <taxon>Methanosphaera</taxon>
    </lineage>
</organism>
<accession>Q2NEL1</accession>
<keyword id="KW-0963">Cytoplasm</keyword>
<keyword id="KW-0251">Elongation factor</keyword>
<keyword id="KW-0342">GTP-binding</keyword>
<keyword id="KW-0378">Hydrolase</keyword>
<keyword id="KW-0460">Magnesium</keyword>
<keyword id="KW-0479">Metal-binding</keyword>
<keyword id="KW-0547">Nucleotide-binding</keyword>
<keyword id="KW-0648">Protein biosynthesis</keyword>
<keyword id="KW-1185">Reference proteome</keyword>